<proteinExistence type="evidence at protein level"/>
<accession>P04631</accession>
<sequence length="92" mass="10744">MSELEKAMVALIDVFHQYSGREGDKHKLKKSELKELINNELSHFLEEIKEQEVVDKVMETLDEDGDGECDFQEFMAFVSMVTTACHEFFEHE</sequence>
<dbReference type="EMBL" id="X01090">
    <property type="protein sequence ID" value="CAA25567.1"/>
    <property type="molecule type" value="mRNA"/>
</dbReference>
<dbReference type="EMBL" id="M54919">
    <property type="protein sequence ID" value="AAA42096.1"/>
    <property type="molecule type" value="mRNA"/>
</dbReference>
<dbReference type="EMBL" id="S53527">
    <property type="status" value="NOT_ANNOTATED_CDS"/>
    <property type="molecule type" value="Genomic_DNA"/>
</dbReference>
<dbReference type="EMBL" id="S53522">
    <property type="status" value="NOT_ANNOTATED_CDS"/>
    <property type="molecule type" value="Genomic_DNA"/>
</dbReference>
<dbReference type="EMBL" id="BC087026">
    <property type="protein sequence ID" value="AAH87026.1"/>
    <property type="molecule type" value="mRNA"/>
</dbReference>
<dbReference type="EMBL" id="M15705">
    <property type="status" value="NOT_ANNOTATED_CDS"/>
    <property type="molecule type" value="mRNA"/>
</dbReference>
<dbReference type="PIR" id="A60046">
    <property type="entry name" value="A26557"/>
</dbReference>
<dbReference type="RefSeq" id="NP_037323.1">
    <property type="nucleotide sequence ID" value="NM_013191.2"/>
</dbReference>
<dbReference type="RefSeq" id="XP_008771090.1">
    <property type="nucleotide sequence ID" value="XM_008772868.3"/>
</dbReference>
<dbReference type="RefSeq" id="XP_017457057.1">
    <property type="nucleotide sequence ID" value="XM_017601568.3"/>
</dbReference>
<dbReference type="RefSeq" id="XP_063135056.1">
    <property type="nucleotide sequence ID" value="XM_063278986.1"/>
</dbReference>
<dbReference type="PDB" id="1B4C">
    <property type="method" value="NMR"/>
    <property type="chains" value="A/B=1-92"/>
</dbReference>
<dbReference type="PDB" id="1DT7">
    <property type="method" value="NMR"/>
    <property type="chains" value="A/B=1-92"/>
</dbReference>
<dbReference type="PDB" id="1MWN">
    <property type="method" value="NMR"/>
    <property type="chains" value="A/B=1-92"/>
</dbReference>
<dbReference type="PDB" id="1QLK">
    <property type="method" value="NMR"/>
    <property type="chains" value="A/B=1-92"/>
</dbReference>
<dbReference type="PDB" id="1SYM">
    <property type="method" value="NMR"/>
    <property type="chains" value="A/B=1-92"/>
</dbReference>
<dbReference type="PDB" id="1XYD">
    <property type="method" value="NMR"/>
    <property type="chains" value="A/B=1-92"/>
</dbReference>
<dbReference type="PDB" id="2K7O">
    <property type="method" value="NMR"/>
    <property type="chains" value="A/B=2-92"/>
</dbReference>
<dbReference type="PDBsum" id="1B4C"/>
<dbReference type="PDBsum" id="1DT7"/>
<dbReference type="PDBsum" id="1MWN"/>
<dbReference type="PDBsum" id="1QLK"/>
<dbReference type="PDBsum" id="1SYM"/>
<dbReference type="PDBsum" id="1XYD"/>
<dbReference type="PDBsum" id="2K7O"/>
<dbReference type="BMRB" id="P04631"/>
<dbReference type="SMR" id="P04631"/>
<dbReference type="BioGRID" id="247770">
    <property type="interactions" value="2"/>
</dbReference>
<dbReference type="FunCoup" id="P04631">
    <property type="interactions" value="123"/>
</dbReference>
<dbReference type="IntAct" id="P04631">
    <property type="interactions" value="3"/>
</dbReference>
<dbReference type="STRING" id="10116.ENSRNOP00000001743"/>
<dbReference type="BindingDB" id="P04631"/>
<dbReference type="ChEMBL" id="CHEMBL3763006"/>
<dbReference type="DrugCentral" id="P04631"/>
<dbReference type="iPTMnet" id="P04631"/>
<dbReference type="PhosphoSitePlus" id="P04631"/>
<dbReference type="SwissPalm" id="P04631"/>
<dbReference type="PaxDb" id="10116-ENSRNOP00000001743"/>
<dbReference type="ABCD" id="P04631">
    <property type="antibodies" value="1 sequenced antibody"/>
</dbReference>
<dbReference type="GeneID" id="25742"/>
<dbReference type="KEGG" id="rno:25742"/>
<dbReference type="UCSC" id="RGD:3615">
    <property type="organism name" value="rat"/>
</dbReference>
<dbReference type="AGR" id="RGD:3615"/>
<dbReference type="CTD" id="6285"/>
<dbReference type="RGD" id="3615">
    <property type="gene designation" value="S100b"/>
</dbReference>
<dbReference type="VEuPathDB" id="HostDB:ENSRNOG00000001295"/>
<dbReference type="eggNOG" id="ENOG502S4HJ">
    <property type="taxonomic scope" value="Eukaryota"/>
</dbReference>
<dbReference type="HOGENOM" id="CLU_138624_2_0_1"/>
<dbReference type="InParanoid" id="P04631"/>
<dbReference type="OrthoDB" id="69530at9989"/>
<dbReference type="PhylomeDB" id="P04631"/>
<dbReference type="TreeFam" id="TF332727"/>
<dbReference type="Reactome" id="R-RNO-445989">
    <property type="pathway name" value="TAK1-dependent IKK and NF-kappa-B activation"/>
</dbReference>
<dbReference type="Reactome" id="R-RNO-879415">
    <property type="pathway name" value="Advanced glycosylation endproduct receptor signaling"/>
</dbReference>
<dbReference type="Reactome" id="R-RNO-933542">
    <property type="pathway name" value="TRAF6 mediated NF-kB activation"/>
</dbReference>
<dbReference type="EvolutionaryTrace" id="P04631"/>
<dbReference type="PRO" id="PR:P04631"/>
<dbReference type="Proteomes" id="UP000002494">
    <property type="component" value="Chromosome 20"/>
</dbReference>
<dbReference type="Bgee" id="ENSRNOG00000001295">
    <property type="expression patterns" value="Expressed in Ammon's horn and 20 other cell types or tissues"/>
</dbReference>
<dbReference type="GO" id="GO:0036064">
    <property type="term" value="C:ciliary basal body"/>
    <property type="evidence" value="ECO:0007669"/>
    <property type="project" value="Ensembl"/>
</dbReference>
<dbReference type="GO" id="GO:0005737">
    <property type="term" value="C:cytoplasm"/>
    <property type="evidence" value="ECO:0000250"/>
    <property type="project" value="UniProtKB"/>
</dbReference>
<dbReference type="GO" id="GO:0005829">
    <property type="term" value="C:cytosol"/>
    <property type="evidence" value="ECO:0007669"/>
    <property type="project" value="Ensembl"/>
</dbReference>
<dbReference type="GO" id="GO:0005576">
    <property type="term" value="C:extracellular region"/>
    <property type="evidence" value="ECO:0000266"/>
    <property type="project" value="RGD"/>
</dbReference>
<dbReference type="GO" id="GO:0005615">
    <property type="term" value="C:extracellular space"/>
    <property type="evidence" value="ECO:0000314"/>
    <property type="project" value="RGD"/>
</dbReference>
<dbReference type="GO" id="GO:0043025">
    <property type="term" value="C:neuronal cell body"/>
    <property type="evidence" value="ECO:0000266"/>
    <property type="project" value="RGD"/>
</dbReference>
<dbReference type="GO" id="GO:0005654">
    <property type="term" value="C:nucleoplasm"/>
    <property type="evidence" value="ECO:0007669"/>
    <property type="project" value="Ensembl"/>
</dbReference>
<dbReference type="GO" id="GO:0005634">
    <property type="term" value="C:nucleus"/>
    <property type="evidence" value="ECO:0000266"/>
    <property type="project" value="RGD"/>
</dbReference>
<dbReference type="GO" id="GO:0048471">
    <property type="term" value="C:perinuclear region of cytoplasm"/>
    <property type="evidence" value="ECO:0000266"/>
    <property type="project" value="RGD"/>
</dbReference>
<dbReference type="GO" id="GO:0001726">
    <property type="term" value="C:ruffle"/>
    <property type="evidence" value="ECO:0000266"/>
    <property type="project" value="RGD"/>
</dbReference>
<dbReference type="GO" id="GO:0005509">
    <property type="term" value="F:calcium ion binding"/>
    <property type="evidence" value="ECO:0000314"/>
    <property type="project" value="UniProtKB"/>
</dbReference>
<dbReference type="GO" id="GO:0048306">
    <property type="term" value="F:calcium-dependent protein binding"/>
    <property type="evidence" value="ECO:0000266"/>
    <property type="project" value="RGD"/>
</dbReference>
<dbReference type="GO" id="GO:0042802">
    <property type="term" value="F:identical protein binding"/>
    <property type="evidence" value="ECO:0000353"/>
    <property type="project" value="RGD"/>
</dbReference>
<dbReference type="GO" id="GO:0042803">
    <property type="term" value="F:protein homodimerization activity"/>
    <property type="evidence" value="ECO:0000266"/>
    <property type="project" value="RGD"/>
</dbReference>
<dbReference type="GO" id="GO:0050786">
    <property type="term" value="F:RAGE receptor binding"/>
    <property type="evidence" value="ECO:0000353"/>
    <property type="project" value="RGD"/>
</dbReference>
<dbReference type="GO" id="GO:0044548">
    <property type="term" value="F:S100 protein binding"/>
    <property type="evidence" value="ECO:0000266"/>
    <property type="project" value="RGD"/>
</dbReference>
<dbReference type="GO" id="GO:0005102">
    <property type="term" value="F:signaling receptor binding"/>
    <property type="evidence" value="ECO:0000353"/>
    <property type="project" value="RGD"/>
</dbReference>
<dbReference type="GO" id="GO:0048156">
    <property type="term" value="F:tau protein binding"/>
    <property type="evidence" value="ECO:0000250"/>
    <property type="project" value="UniProtKB"/>
</dbReference>
<dbReference type="GO" id="GO:0008270">
    <property type="term" value="F:zinc ion binding"/>
    <property type="evidence" value="ECO:0000314"/>
    <property type="project" value="UniProtKB"/>
</dbReference>
<dbReference type="GO" id="GO:1990845">
    <property type="term" value="P:adaptive thermogenesis"/>
    <property type="evidence" value="ECO:0000250"/>
    <property type="project" value="UniProtKB"/>
</dbReference>
<dbReference type="GO" id="GO:0048708">
    <property type="term" value="P:astrocyte differentiation"/>
    <property type="evidence" value="ECO:0000270"/>
    <property type="project" value="RGD"/>
</dbReference>
<dbReference type="GO" id="GO:0007155">
    <property type="term" value="P:cell adhesion"/>
    <property type="evidence" value="ECO:0007669"/>
    <property type="project" value="UniProtKB-KW"/>
</dbReference>
<dbReference type="GO" id="GO:0071456">
    <property type="term" value="P:cellular response to hypoxia"/>
    <property type="evidence" value="ECO:0000270"/>
    <property type="project" value="RGD"/>
</dbReference>
<dbReference type="GO" id="GO:0007611">
    <property type="term" value="P:learning or memory"/>
    <property type="evidence" value="ECO:0000250"/>
    <property type="project" value="UniProtKB"/>
</dbReference>
<dbReference type="GO" id="GO:0060291">
    <property type="term" value="P:long-term synaptic potentiation"/>
    <property type="evidence" value="ECO:0000270"/>
    <property type="project" value="RGD"/>
</dbReference>
<dbReference type="GO" id="GO:0007613">
    <property type="term" value="P:memory"/>
    <property type="evidence" value="ECO:0000266"/>
    <property type="project" value="RGD"/>
</dbReference>
<dbReference type="GO" id="GO:2001015">
    <property type="term" value="P:negative regulation of skeletal muscle cell differentiation"/>
    <property type="evidence" value="ECO:0000315"/>
    <property type="project" value="RGD"/>
</dbReference>
<dbReference type="GO" id="GO:1990138">
    <property type="term" value="P:neuron projection extension"/>
    <property type="evidence" value="ECO:0000266"/>
    <property type="project" value="RGD"/>
</dbReference>
<dbReference type="GO" id="GO:0043065">
    <property type="term" value="P:positive regulation of apoptotic process"/>
    <property type="evidence" value="ECO:0000315"/>
    <property type="project" value="RGD"/>
</dbReference>
<dbReference type="GO" id="GO:0043123">
    <property type="term" value="P:positive regulation of canonical NF-kappaB signal transduction"/>
    <property type="evidence" value="ECO:0000266"/>
    <property type="project" value="RGD"/>
</dbReference>
<dbReference type="GO" id="GO:0008284">
    <property type="term" value="P:positive regulation of cell population proliferation"/>
    <property type="evidence" value="ECO:0000315"/>
    <property type="project" value="RGD"/>
</dbReference>
<dbReference type="GO" id="GO:0031643">
    <property type="term" value="P:positive regulation of myelination"/>
    <property type="evidence" value="ECO:0000315"/>
    <property type="project" value="RGD"/>
</dbReference>
<dbReference type="GO" id="GO:0045666">
    <property type="term" value="P:positive regulation of neuron differentiation"/>
    <property type="evidence" value="ECO:0000266"/>
    <property type="project" value="RGD"/>
</dbReference>
<dbReference type="GO" id="GO:0050806">
    <property type="term" value="P:positive regulation of synaptic transmission"/>
    <property type="evidence" value="ECO:0000315"/>
    <property type="project" value="RGD"/>
</dbReference>
<dbReference type="GO" id="GO:0008360">
    <property type="term" value="P:regulation of cell shape"/>
    <property type="evidence" value="ECO:0000315"/>
    <property type="project" value="RGD"/>
</dbReference>
<dbReference type="GO" id="GO:0048168">
    <property type="term" value="P:regulation of neuronal synaptic plasticity"/>
    <property type="evidence" value="ECO:0000266"/>
    <property type="project" value="RGD"/>
</dbReference>
<dbReference type="GO" id="GO:0072347">
    <property type="term" value="P:response to anesthetic"/>
    <property type="evidence" value="ECO:0000270"/>
    <property type="project" value="RGD"/>
</dbReference>
<dbReference type="GO" id="GO:0045471">
    <property type="term" value="P:response to ethanol"/>
    <property type="evidence" value="ECO:0000270"/>
    <property type="project" value="RGD"/>
</dbReference>
<dbReference type="GO" id="GO:0051384">
    <property type="term" value="P:response to glucocorticoid"/>
    <property type="evidence" value="ECO:0000270"/>
    <property type="project" value="RGD"/>
</dbReference>
<dbReference type="GO" id="GO:0051597">
    <property type="term" value="P:response to methylmercury"/>
    <property type="evidence" value="ECO:0000270"/>
    <property type="project" value="RGD"/>
</dbReference>
<dbReference type="GO" id="GO:0097490">
    <property type="term" value="P:sympathetic neuron projection extension"/>
    <property type="evidence" value="ECO:0000250"/>
    <property type="project" value="UniProtKB"/>
</dbReference>
<dbReference type="CDD" id="cd05027">
    <property type="entry name" value="S-100B"/>
    <property type="match status" value="1"/>
</dbReference>
<dbReference type="FunFam" id="1.10.238.10:FF:000044">
    <property type="entry name" value="Protein S100"/>
    <property type="match status" value="1"/>
</dbReference>
<dbReference type="Gene3D" id="1.10.238.10">
    <property type="entry name" value="EF-hand"/>
    <property type="match status" value="1"/>
</dbReference>
<dbReference type="IDEAL" id="IID50019"/>
<dbReference type="InterPro" id="IPR011992">
    <property type="entry name" value="EF-hand-dom_pair"/>
</dbReference>
<dbReference type="InterPro" id="IPR018247">
    <property type="entry name" value="EF_Hand_1_Ca_BS"/>
</dbReference>
<dbReference type="InterPro" id="IPR002048">
    <property type="entry name" value="EF_hand_dom"/>
</dbReference>
<dbReference type="InterPro" id="IPR028481">
    <property type="entry name" value="S100-B"/>
</dbReference>
<dbReference type="InterPro" id="IPR001751">
    <property type="entry name" value="S100/CaBP7/8-like_CS"/>
</dbReference>
<dbReference type="InterPro" id="IPR013787">
    <property type="entry name" value="S100_Ca-bd_sub"/>
</dbReference>
<dbReference type="PANTHER" id="PTHR11639:SF134">
    <property type="entry name" value="PROTEIN S100-A1-RELATED"/>
    <property type="match status" value="1"/>
</dbReference>
<dbReference type="PANTHER" id="PTHR11639">
    <property type="entry name" value="S100 CALCIUM-BINDING PROTEIN"/>
    <property type="match status" value="1"/>
</dbReference>
<dbReference type="Pfam" id="PF00036">
    <property type="entry name" value="EF-hand_1"/>
    <property type="match status" value="1"/>
</dbReference>
<dbReference type="Pfam" id="PF01023">
    <property type="entry name" value="S_100"/>
    <property type="match status" value="1"/>
</dbReference>
<dbReference type="SMART" id="SM00054">
    <property type="entry name" value="EFh"/>
    <property type="match status" value="1"/>
</dbReference>
<dbReference type="SMART" id="SM01394">
    <property type="entry name" value="S_100"/>
    <property type="match status" value="1"/>
</dbReference>
<dbReference type="SUPFAM" id="SSF47473">
    <property type="entry name" value="EF-hand"/>
    <property type="match status" value="1"/>
</dbReference>
<dbReference type="PROSITE" id="PS00018">
    <property type="entry name" value="EF_HAND_1"/>
    <property type="match status" value="1"/>
</dbReference>
<dbReference type="PROSITE" id="PS50222">
    <property type="entry name" value="EF_HAND_2"/>
    <property type="match status" value="1"/>
</dbReference>
<dbReference type="PROSITE" id="PS00303">
    <property type="entry name" value="S100_CABP"/>
    <property type="match status" value="1"/>
</dbReference>
<name>S100B_RAT</name>
<feature type="initiator methionine" description="Removed" evidence="1">
    <location>
        <position position="1"/>
    </location>
</feature>
<feature type="chain" id="PRO_0000143969" description="Protein S100-B">
    <location>
        <begin position="2"/>
        <end position="92"/>
    </location>
</feature>
<feature type="domain" description="EF-hand 1" evidence="14">
    <location>
        <begin position="13"/>
        <end position="48"/>
    </location>
</feature>
<feature type="domain" description="EF-hand 2" evidence="4">
    <location>
        <begin position="49"/>
        <end position="84"/>
    </location>
</feature>
<feature type="binding site" evidence="15">
    <location>
        <position position="16"/>
    </location>
    <ligand>
        <name>Zn(2+)</name>
        <dbReference type="ChEBI" id="CHEBI:29105"/>
    </ligand>
</feature>
<feature type="binding site" evidence="10 18">
    <location>
        <position position="19"/>
    </location>
    <ligand>
        <name>Ca(2+)</name>
        <dbReference type="ChEBI" id="CHEBI:29108"/>
        <label>1</label>
        <note>low affinity</note>
    </ligand>
</feature>
<feature type="binding site" evidence="10 18">
    <location>
        <position position="22"/>
    </location>
    <ligand>
        <name>Ca(2+)</name>
        <dbReference type="ChEBI" id="CHEBI:29108"/>
        <label>1</label>
        <note>low affinity</note>
    </ligand>
</feature>
<feature type="binding site" evidence="15">
    <location>
        <position position="26"/>
    </location>
    <ligand>
        <name>Zn(2+)</name>
        <dbReference type="ChEBI" id="CHEBI:29105"/>
    </ligand>
</feature>
<feature type="binding site" evidence="10 18">
    <location>
        <position position="27"/>
    </location>
    <ligand>
        <name>Ca(2+)</name>
        <dbReference type="ChEBI" id="CHEBI:29108"/>
        <label>1</label>
        <note>low affinity</note>
    </ligand>
</feature>
<feature type="binding site" evidence="10 18">
    <location>
        <position position="32"/>
    </location>
    <ligand>
        <name>Ca(2+)</name>
        <dbReference type="ChEBI" id="CHEBI:29108"/>
        <label>1</label>
        <note>low affinity</note>
    </ligand>
</feature>
<feature type="binding site" evidence="4 10 18">
    <location>
        <position position="62"/>
    </location>
    <ligand>
        <name>Ca(2+)</name>
        <dbReference type="ChEBI" id="CHEBI:29108"/>
        <label>2</label>
        <note>high affinity</note>
    </ligand>
</feature>
<feature type="binding site" evidence="4 10 18">
    <location>
        <position position="64"/>
    </location>
    <ligand>
        <name>Ca(2+)</name>
        <dbReference type="ChEBI" id="CHEBI:29108"/>
        <label>2</label>
        <note>high affinity</note>
    </ligand>
</feature>
<feature type="binding site" evidence="4 10 18">
    <location>
        <position position="66"/>
    </location>
    <ligand>
        <name>Ca(2+)</name>
        <dbReference type="ChEBI" id="CHEBI:29108"/>
        <label>2</label>
        <note>high affinity</note>
    </ligand>
</feature>
<feature type="binding site" evidence="4 10 18">
    <location>
        <position position="68"/>
    </location>
    <ligand>
        <name>Ca(2+)</name>
        <dbReference type="ChEBI" id="CHEBI:29108"/>
        <label>2</label>
        <note>high affinity</note>
    </ligand>
</feature>
<feature type="binding site" evidence="4 10 18">
    <location>
        <position position="73"/>
    </location>
    <ligand>
        <name>Ca(2+)</name>
        <dbReference type="ChEBI" id="CHEBI:29108"/>
        <label>2</label>
        <note>high affinity</note>
    </ligand>
</feature>
<feature type="binding site" evidence="15">
    <location>
        <position position="86"/>
    </location>
    <ligand>
        <name>Zn(2+)</name>
        <dbReference type="ChEBI" id="CHEBI:29105"/>
    </ligand>
</feature>
<feature type="binding site" evidence="15">
    <location>
        <position position="91"/>
    </location>
    <ligand>
        <name>Zn(2+)</name>
        <dbReference type="ChEBI" id="CHEBI:29105"/>
    </ligand>
</feature>
<feature type="modified residue" description="N-acetylserine" evidence="1">
    <location>
        <position position="2"/>
    </location>
</feature>
<feature type="mutagenesis site" description="Decreased zinc-binding." evidence="7">
    <original>H</original>
    <variation>A</variation>
    <location>
        <position position="16"/>
    </location>
</feature>
<feature type="mutagenesis site" description="Decreased zinc-binding." evidence="7">
    <original>H</original>
    <variation>A</variation>
    <location>
        <position position="26"/>
    </location>
</feature>
<feature type="mutagenesis site" description="Does not affect zinc-binding." evidence="7">
    <original>H</original>
    <variation>A</variation>
    <location>
        <position position="43"/>
    </location>
</feature>
<feature type="mutagenesis site" description="Does not affect zinc-binding." evidence="7">
    <original>C</original>
    <variation>A</variation>
    <location>
        <position position="69"/>
    </location>
</feature>
<feature type="mutagenesis site" description="Decreased zinc-binding." evidence="7">
    <original>C</original>
    <variation>A</variation>
    <location>
        <position position="85"/>
    </location>
</feature>
<feature type="mutagenesis site" description="Decreased zinc-binding." evidence="7">
    <original>H</original>
    <variation>A</variation>
    <location>
        <position position="86"/>
    </location>
</feature>
<feature type="mutagenesis site" description="Decreased zinc-binding." evidence="7">
    <original>H</original>
    <variation>A</variation>
    <location>
        <position position="91"/>
    </location>
</feature>
<feature type="helix" evidence="19">
    <location>
        <begin position="3"/>
        <end position="18"/>
    </location>
</feature>
<feature type="strand" evidence="22">
    <location>
        <begin position="21"/>
        <end position="23"/>
    </location>
</feature>
<feature type="strand" evidence="20">
    <location>
        <begin position="25"/>
        <end position="29"/>
    </location>
</feature>
<feature type="helix" evidence="19">
    <location>
        <begin position="30"/>
        <end position="40"/>
    </location>
</feature>
<feature type="helix" evidence="21">
    <location>
        <begin position="41"/>
        <end position="43"/>
    </location>
</feature>
<feature type="helix" evidence="19">
    <location>
        <begin position="44"/>
        <end position="47"/>
    </location>
</feature>
<feature type="helix" evidence="19">
    <location>
        <begin position="51"/>
        <end position="62"/>
    </location>
</feature>
<feature type="strand" evidence="19">
    <location>
        <begin position="66"/>
        <end position="69"/>
    </location>
</feature>
<feature type="helix" evidence="19">
    <location>
        <begin position="71"/>
        <end position="84"/>
    </location>
</feature>
<feature type="strand" evidence="19">
    <location>
        <begin position="85"/>
        <end position="87"/>
    </location>
</feature>
<feature type="turn" evidence="23">
    <location>
        <begin position="88"/>
        <end position="90"/>
    </location>
</feature>
<organism>
    <name type="scientific">Rattus norvegicus</name>
    <name type="common">Rat</name>
    <dbReference type="NCBI Taxonomy" id="10116"/>
    <lineage>
        <taxon>Eukaryota</taxon>
        <taxon>Metazoa</taxon>
        <taxon>Chordata</taxon>
        <taxon>Craniata</taxon>
        <taxon>Vertebrata</taxon>
        <taxon>Euteleostomi</taxon>
        <taxon>Mammalia</taxon>
        <taxon>Eutheria</taxon>
        <taxon>Euarchontoglires</taxon>
        <taxon>Glires</taxon>
        <taxon>Rodentia</taxon>
        <taxon>Myomorpha</taxon>
        <taxon>Muroidea</taxon>
        <taxon>Muridae</taxon>
        <taxon>Murinae</taxon>
        <taxon>Rattus</taxon>
    </lineage>
</organism>
<protein>
    <recommendedName>
        <fullName>Protein S100-B</fullName>
    </recommendedName>
    <alternativeName>
        <fullName>S-100 protein beta chain</fullName>
    </alternativeName>
    <alternativeName>
        <fullName>S-100 protein subunit beta</fullName>
    </alternativeName>
    <alternativeName>
        <fullName>S100 calcium-binding protein B</fullName>
    </alternativeName>
</protein>
<gene>
    <name evidence="13 16" type="primary">S100b</name>
</gene>
<evidence type="ECO:0000250" key="1">
    <source>
        <dbReference type="UniProtKB" id="P02638"/>
    </source>
</evidence>
<evidence type="ECO:0000250" key="2">
    <source>
        <dbReference type="UniProtKB" id="P04271"/>
    </source>
</evidence>
<evidence type="ECO:0000250" key="3">
    <source>
        <dbReference type="UniProtKB" id="P50114"/>
    </source>
</evidence>
<evidence type="ECO:0000255" key="4">
    <source>
        <dbReference type="PROSITE-ProRule" id="PRU00448"/>
    </source>
</evidence>
<evidence type="ECO:0000269" key="5">
    <source>
    </source>
</evidence>
<evidence type="ECO:0000269" key="6">
    <source>
    </source>
</evidence>
<evidence type="ECO:0000269" key="7">
    <source>
    </source>
</evidence>
<evidence type="ECO:0000269" key="8">
    <source>
    </source>
</evidence>
<evidence type="ECO:0000269" key="9">
    <source>
    </source>
</evidence>
<evidence type="ECO:0000269" key="10">
    <source>
    </source>
</evidence>
<evidence type="ECO:0000269" key="11">
    <source>
    </source>
</evidence>
<evidence type="ECO:0000269" key="12">
    <source>
    </source>
</evidence>
<evidence type="ECO:0000303" key="13">
    <source>
    </source>
</evidence>
<evidence type="ECO:0000305" key="14"/>
<evidence type="ECO:0000305" key="15">
    <source>
    </source>
</evidence>
<evidence type="ECO:0000312" key="16">
    <source>
        <dbReference type="RGD" id="3615"/>
    </source>
</evidence>
<evidence type="ECO:0007744" key="17">
    <source>
        <dbReference type="PDB" id="1XYD"/>
    </source>
</evidence>
<evidence type="ECO:0007744" key="18">
    <source>
        <dbReference type="PDB" id="2K7O"/>
    </source>
</evidence>
<evidence type="ECO:0007829" key="19">
    <source>
        <dbReference type="PDB" id="1B4C"/>
    </source>
</evidence>
<evidence type="ECO:0007829" key="20">
    <source>
        <dbReference type="PDB" id="1DT7"/>
    </source>
</evidence>
<evidence type="ECO:0007829" key="21">
    <source>
        <dbReference type="PDB" id="1QLK"/>
    </source>
</evidence>
<evidence type="ECO:0007829" key="22">
    <source>
        <dbReference type="PDB" id="1SYM"/>
    </source>
</evidence>
<evidence type="ECO:0007829" key="23">
    <source>
        <dbReference type="PDB" id="1XYD"/>
    </source>
</evidence>
<comment type="function">
    <text evidence="1 2 3 7 8 10 11 12">Small zinc- and- and calcium-binding protein that is highly expressed in astrocytes and constitutes one of the most abundant soluble proteins in brain (PubMed:14621986, PubMed:15823027, PubMed:18949447, PubMed:20351179). Weakly binds calcium but binds zinc very tightly-distinct binding sites with different affinities exist for both ions on each monomer (PubMed:15823027). Physiological concentrations of potassium ion antagonize the binding of both divalent cations, especially affecting high-affinity calcium-binding sites (By similarity). Acts as a neurotrophic factor that promotes astrocytosis and axonal proliferation (By similarity). Involved in innervation of thermogenic adipose tissue by acting as an adipocyte-derived neurotrophic factor that promotes sympathetic innervation of adipose tissue (By similarity). Binds to and initiates the activation of STK38 by releasing autoinhibitory intramolecular interactions within the kinase (By similarity). Interaction with AGER after myocardial infarction may play a role in myocyte apoptosis by activating ERK1/2 and p53/TP53 signaling (PubMed:19910580). Could assist ATAD3A cytoplasmic processing, preventing aggregation and favoring mitochondrial localization (By similarity). May mediate calcium-dependent regulation on many physiological processes by interacting with other proteins, such as TPR-containing proteins, and modulating their activity (By similarity).</text>
</comment>
<comment type="subunit">
    <text evidence="1 2 3 5 6 11 12">Dimer of either two alpha chains, or two beta chains, or one alpha and one beta chain (By similarity). The S100B dimer binds two molecules of STK38 (By similarity). Interacts with CACYBP in a calcium-dependent manner (PubMed:12042313). Interacts with ATAD3A; this interaction probably occurs in the cytosol prior to ATAD3A mitochondrial targeting (PubMed:20351179). Interacts with S100A6 (By similarity). The S100B dimer interacts with two molecules of CAPZA1 (PubMed:12470955). Interacts with AGER (PubMed:19910580). Interacts with PPP5C (via TPR repeats); the interaction is calcium-dependent and modulates PPP5C activity (By similarity). Interacts with TPPP; this interaction inhibits TPPP dimerization (By similarity). Interacts with isoform CLSTN3beta of CLSTN3; interaction promotes secretion (By similarity).</text>
</comment>
<comment type="interaction">
    <interactant intactId="EBI-2696631">
        <id>P04631</id>
    </interactant>
    <interactant intactId="EBI-6479195">
        <id>Q63495</id>
        <label>Ager</label>
    </interactant>
    <organismsDiffer>false</organismsDiffer>
    <experiments>3</experiments>
</comment>
<comment type="subcellular location">
    <subcellularLocation>
        <location evidence="2">Cytoplasm</location>
    </subcellularLocation>
    <subcellularLocation>
        <location evidence="2">Nucleus</location>
    </subcellularLocation>
    <subcellularLocation>
        <location evidence="3">Secreted</location>
    </subcellularLocation>
    <text evidence="3">Secretion into the medium is promoted by interaction with isoform CLSTN3beta of CLSTN3.</text>
</comment>
<comment type="tissue specificity">
    <text evidence="9">Although predominant among the water-soluble brain proteins, S100 is also found in a variety of other tissues.</text>
</comment>
<comment type="induction">
    <text evidence="11">Up-regulated in periinfarct ventricular myocardium.</text>
</comment>
<comment type="similarity">
    <text evidence="14">Belongs to the S-100 family.</text>
</comment>
<keyword id="KW-0002">3D-structure</keyword>
<keyword id="KW-0007">Acetylation</keyword>
<keyword id="KW-0106">Calcium</keyword>
<keyword id="KW-0130">Cell adhesion</keyword>
<keyword id="KW-0963">Cytoplasm</keyword>
<keyword id="KW-0903">Direct protein sequencing</keyword>
<keyword id="KW-0479">Metal-binding</keyword>
<keyword id="KW-0539">Nucleus</keyword>
<keyword id="KW-1185">Reference proteome</keyword>
<keyword id="KW-0677">Repeat</keyword>
<keyword id="KW-0964">Secreted</keyword>
<keyword id="KW-0862">Zinc</keyword>
<reference key="1">
    <citation type="journal article" date="1984" name="Nucleic Acids Res.">
        <title>Molecular cloning and the complete nucleotide sequence of cDNA to mRNA for S-100 protein of rat brain.</title>
        <authorList>
            <person name="Kuwano R."/>
            <person name="Usui H."/>
            <person name="Maeda T."/>
            <person name="Fukui T."/>
            <person name="Yamanari N."/>
            <person name="Ohtsuka E."/>
            <person name="Ikehara M."/>
            <person name="Takahashi Y."/>
        </authorList>
    </citation>
    <scope>NUCLEOTIDE SEQUENCE [MRNA]</scope>
</reference>
<reference key="2">
    <citation type="journal article" date="1987" name="Taniguchi Symp. Brain Sci.">
        <title>Molecular cloning and nucleotide sequences of cDNA and genomic DNA for alpha and beta subunits of S100 protein.</title>
        <authorList>
            <person name="Kuwano R."/>
            <person name="Usui H."/>
            <person name="Maeda T."/>
            <person name="Araki K."/>
            <person name="Kurihara T."/>
            <person name="Yamakuni T."/>
            <person name="Ohtsuka E."/>
            <person name="Ikehara M."/>
            <person name="Takahashi Y."/>
        </authorList>
    </citation>
    <scope>NUCLEOTIDE SEQUENCE [MRNA]</scope>
</reference>
<reference key="3">
    <citation type="journal article" date="1991" name="Brain Res. Mol. Brain Res.">
        <title>Structure and expression of rat S-100 beta subunit gene.</title>
        <authorList>
            <person name="Maeda T."/>
            <person name="Usui H."/>
            <person name="Araki K."/>
            <person name="Kuwano R."/>
            <person name="Takahashi Y."/>
            <person name="Suzuki Y."/>
        </authorList>
    </citation>
    <scope>NUCLEOTIDE SEQUENCE [GENOMIC DNA]</scope>
    <scope>TISSUE SPECIFICITY</scope>
</reference>
<reference key="4">
    <citation type="journal article" date="2004" name="Genome Res.">
        <title>The status, quality, and expansion of the NIH full-length cDNA project: the Mammalian Gene Collection (MGC).</title>
        <authorList>
            <consortium name="The MGC Project Team"/>
        </authorList>
    </citation>
    <scope>NUCLEOTIDE SEQUENCE [LARGE SCALE MRNA]</scope>
    <source>
        <tissue>Heart</tissue>
    </source>
</reference>
<reference key="5">
    <citation type="journal article" date="1987" name="J. Biol. Chem.">
        <title>Reduction in S100 protein beta subunit mRNA in C6 rat glioma cells following treatment with anti-microtubular drugs.</title>
        <authorList>
            <person name="Dunn R."/>
            <person name="Landry C."/>
            <person name="O'Hanlon D."/>
            <person name="Dunn J."/>
            <person name="Allore R."/>
            <person name="Brown I."/>
            <person name="Marks A."/>
        </authorList>
    </citation>
    <scope>NUCLEOTIDE SEQUENCE [MRNA] OF 6-92</scope>
</reference>
<reference key="6">
    <citation type="submission" date="2007-07" db="UniProtKB">
        <authorList>
            <person name="Lubec G."/>
            <person name="Afjehi-Sadat L."/>
            <person name="Kang S.U."/>
        </authorList>
    </citation>
    <scope>PROTEIN SEQUENCE OF 7-21 AND 35-56</scope>
    <scope>IDENTIFICATION BY MASS SPECTROMETRY</scope>
    <source>
        <strain>Sprague-Dawley</strain>
        <tissue>Brain</tissue>
        <tissue>Spinal cord</tissue>
    </source>
</reference>
<reference key="7">
    <citation type="journal article" date="2002" name="J. Biol. Chem.">
        <title>CacyBP/SIP, a calcyclin and Siah-1-interacting protein, binds EF-hand proteins of the S100 family.</title>
        <authorList>
            <person name="Filipek A."/>
            <person name="Jastrzebska B."/>
            <person name="Nowotny M."/>
            <person name="Kuznicki J."/>
        </authorList>
    </citation>
    <scope>INTERACTION WITH CACYBP</scope>
</reference>
<reference key="8">
    <citation type="journal article" date="2010" name="Circ. Res.">
        <title>S100B interaction with the receptor for advanced glycation end products (RAGE): a novel receptor-mediated mechanism for myocyte apoptosis postinfarction.</title>
        <authorList>
            <person name="Tsoporis J.N."/>
            <person name="Izhar S."/>
            <person name="Leong-Poi H."/>
            <person name="Desjardins J.F."/>
            <person name="Huttunen H.J."/>
            <person name="Parker T.G."/>
        </authorList>
    </citation>
    <scope>FUNCTION</scope>
    <scope>INTERACTION WITH AGER</scope>
    <scope>INDUCTION</scope>
</reference>
<reference key="9">
    <citation type="journal article" date="2010" name="Mol. Cell. Biol.">
        <title>The calcium-dependent interaction between S100B and the mitochondrial AAA ATPase ATAD3A and the role of this complex in the cytoplasmic processing of ATAD3A.</title>
        <authorList>
            <person name="Gilquin B."/>
            <person name="Cannon B.R."/>
            <person name="Hubstenberger A."/>
            <person name="Moulouel B."/>
            <person name="Falk E."/>
            <person name="Merle N."/>
            <person name="Assard N."/>
            <person name="Kieffer S."/>
            <person name="Rousseau D."/>
            <person name="Wilder P.T."/>
            <person name="Weber D.J."/>
            <person name="Baudier J."/>
        </authorList>
    </citation>
    <scope>FUNCTION</scope>
    <scope>INTERACTION WITH ATAD3A</scope>
</reference>
<reference key="10">
    <citation type="journal article" date="1996" name="Biochemistry">
        <title>Solution structure of rat apo-S100B(beta beta) as determined by NMR spectroscopy.</title>
        <authorList>
            <person name="Drohat A.C."/>
            <person name="Amburgey J.C."/>
            <person name="Abildgaard F."/>
            <person name="Starich M.R."/>
            <person name="Baldisseri D.M."/>
            <person name="Weber D.J."/>
        </authorList>
    </citation>
    <scope>STRUCTURE BY NMR</scope>
</reference>
<reference key="11">
    <citation type="journal article" date="1998" name="Biochemistry">
        <title>Solution structure of calcium-bound rat S100B(betabeta) as determined by nuclear magnetic resonance spectroscopy.</title>
        <authorList>
            <person name="Drohat A.C."/>
            <person name="Baldisseri D.M."/>
            <person name="Rustandi R.R."/>
            <person name="Weber D.J."/>
        </authorList>
    </citation>
    <scope>STRUCTURE BY NMR</scope>
</reference>
<reference key="12">
    <citation type="journal article" date="2003" name="Biochemistry">
        <title>Location of the Zn(2+)-binding site on S100B as determined by NMR spectroscopy and site-directed mutagenesis.</title>
        <authorList>
            <person name="Wilder P.T."/>
            <person name="Baldisseri D.M."/>
            <person name="Udan R."/>
            <person name="Vallely K.M."/>
            <person name="Weber D.J."/>
        </authorList>
    </citation>
    <scope>FUNCTION</scope>
    <scope>ZINC-BINDING SITES</scope>
    <scope>MUTAGENESIS OF HIS-16; HIS-26; HIS-43; CYS-69; CYS-85; HIS-86 AND HIS-91</scope>
</reference>
<reference key="13">
    <citation type="journal article" date="1999" name="Protein Sci.">
        <title>The use of dipolar couplings for determining the solution structure of rat apo-S100B.</title>
        <authorList>
            <person name="Drohat A.C."/>
            <person name="Tjandra N."/>
            <person name="Baldisseri D.M."/>
            <person name="Weber D.J."/>
        </authorList>
    </citation>
    <scope>STRUCTURE BY NMR</scope>
</reference>
<reference key="14">
    <citation type="journal article" date="2002" name="J. Mol. Biol.">
        <title>Solution NMR structure of S100B bound to the high-affinity target peptide TRTK-12.</title>
        <authorList>
            <person name="Inman K.G."/>
            <person name="Yang R."/>
            <person name="Rustandi R.R."/>
            <person name="Miller K.E."/>
            <person name="Baldisseri D.M."/>
            <person name="Weber D.J."/>
        </authorList>
    </citation>
    <scope>STRUCTURE BY NMR IN COMPLEX WITH CAPZA1 AND CALCIUM</scope>
</reference>
<reference evidence="17" key="15">
    <citation type="journal article" date="2005" name="Biochemistry">
        <title>Solution structure of zinc- and calcium-bound rat S100B as determined by nuclear magnetic resonance spectroscopy.</title>
        <authorList>
            <person name="Wilder P.T."/>
            <person name="Varney K.M."/>
            <person name="Weiss M.B."/>
            <person name="Gitti R.K."/>
            <person name="Weber D.J."/>
        </authorList>
    </citation>
    <scope>STRUCTURE BY NMR</scope>
    <scope>FUNCTION</scope>
</reference>
<reference evidence="18" key="16">
    <citation type="journal article" date="2008" name="J. Biomol. NMR">
        <title>Refinement of the solution structure and dynamic properties of Ca(2+)-bound rat S100B.</title>
        <authorList>
            <person name="Wright N.T."/>
            <person name="Inman K.G."/>
            <person name="Levine J.A."/>
            <person name="Cannon B.R."/>
            <person name="Varney K.M."/>
            <person name="Weber D.J."/>
        </authorList>
    </citation>
    <scope>STRUCTURE BY NMR OF 2-92 IN COMPLEX WITH CALCIUM</scope>
    <scope>FUNCTION</scope>
</reference>